<comment type="subcellular location">
    <subcellularLocation>
        <location evidence="1">Secreted</location>
    </subcellularLocation>
</comment>
<comment type="tissue specificity">
    <text evidence="4">Expressed by the venom gland.</text>
</comment>
<comment type="similarity">
    <text evidence="4">Belongs to the three-finger toxin family. Short-chain subfamily.</text>
</comment>
<accession>Q2VBN3</accession>
<name>3SX3_OPHHA</name>
<keyword id="KW-1015">Disulfide bond</keyword>
<keyword id="KW-0964">Secreted</keyword>
<keyword id="KW-0732">Signal</keyword>
<keyword id="KW-0800">Toxin</keyword>
<evidence type="ECO:0000250" key="1"/>
<evidence type="ECO:0000250" key="2">
    <source>
        <dbReference type="UniProtKB" id="P0C1Z0"/>
    </source>
</evidence>
<evidence type="ECO:0000303" key="3">
    <source>
    </source>
</evidence>
<evidence type="ECO:0000305" key="4"/>
<protein>
    <recommendedName>
        <fullName evidence="3">Weak neurotoxin WNTX33</fullName>
    </recommendedName>
    <alternativeName>
        <fullName>Three-finger toxin</fullName>
        <shortName>3FTx</shortName>
    </alternativeName>
</protein>
<dbReference type="EMBL" id="DQ273582">
    <property type="protein sequence ID" value="ABB83636.1"/>
    <property type="molecule type" value="mRNA"/>
</dbReference>
<dbReference type="SMR" id="Q2VBN3"/>
<dbReference type="TopDownProteomics" id="Q2VBN3"/>
<dbReference type="GO" id="GO:0005576">
    <property type="term" value="C:extracellular region"/>
    <property type="evidence" value="ECO:0007669"/>
    <property type="project" value="UniProtKB-SubCell"/>
</dbReference>
<dbReference type="GO" id="GO:0090729">
    <property type="term" value="F:toxin activity"/>
    <property type="evidence" value="ECO:0007669"/>
    <property type="project" value="UniProtKB-KW"/>
</dbReference>
<dbReference type="CDD" id="cd00206">
    <property type="entry name" value="TFP_snake_toxin"/>
    <property type="match status" value="1"/>
</dbReference>
<dbReference type="FunFam" id="2.10.60.10:FF:000024">
    <property type="entry name" value="Cytotoxin 1"/>
    <property type="match status" value="1"/>
</dbReference>
<dbReference type="Gene3D" id="2.10.60.10">
    <property type="entry name" value="CD59"/>
    <property type="match status" value="1"/>
</dbReference>
<dbReference type="InterPro" id="IPR003571">
    <property type="entry name" value="Snake_3FTx"/>
</dbReference>
<dbReference type="InterPro" id="IPR045860">
    <property type="entry name" value="Snake_toxin-like_sf"/>
</dbReference>
<dbReference type="InterPro" id="IPR018354">
    <property type="entry name" value="Snake_toxin_con_site"/>
</dbReference>
<dbReference type="InterPro" id="IPR054131">
    <property type="entry name" value="Toxin_cobra-type"/>
</dbReference>
<dbReference type="Pfam" id="PF21947">
    <property type="entry name" value="Toxin_cobra-type"/>
    <property type="match status" value="1"/>
</dbReference>
<dbReference type="SUPFAM" id="SSF57302">
    <property type="entry name" value="Snake toxin-like"/>
    <property type="match status" value="1"/>
</dbReference>
<dbReference type="PROSITE" id="PS00272">
    <property type="entry name" value="SNAKE_TOXIN"/>
    <property type="match status" value="1"/>
</dbReference>
<organism>
    <name type="scientific">Ophiophagus hannah</name>
    <name type="common">King cobra</name>
    <name type="synonym">Naja hannah</name>
    <dbReference type="NCBI Taxonomy" id="8665"/>
    <lineage>
        <taxon>Eukaryota</taxon>
        <taxon>Metazoa</taxon>
        <taxon>Chordata</taxon>
        <taxon>Craniata</taxon>
        <taxon>Vertebrata</taxon>
        <taxon>Euteleostomi</taxon>
        <taxon>Lepidosauria</taxon>
        <taxon>Squamata</taxon>
        <taxon>Bifurcata</taxon>
        <taxon>Unidentata</taxon>
        <taxon>Episquamata</taxon>
        <taxon>Toxicofera</taxon>
        <taxon>Serpentes</taxon>
        <taxon>Colubroidea</taxon>
        <taxon>Elapidae</taxon>
        <taxon>Elapinae</taxon>
        <taxon>Ophiophagus</taxon>
    </lineage>
</organism>
<proteinExistence type="inferred from homology"/>
<reference key="1">
    <citation type="journal article" date="2006" name="Biochem. J.">
        <title>Novel genes encoding six kinds of three-finger toxins in Ophiophagus hannah (king cobra) and function characterization of two recombinant long-chain neurotoxins.</title>
        <authorList>
            <person name="Li J."/>
            <person name="Zhang H."/>
            <person name="Liu J."/>
            <person name="Xu K."/>
        </authorList>
    </citation>
    <scope>NUCLEOTIDE SEQUENCE [MRNA]</scope>
    <source>
        <tissue>Venom gland</tissue>
    </source>
</reference>
<feature type="signal peptide" evidence="1">
    <location>
        <begin position="1"/>
        <end position="21"/>
    </location>
</feature>
<feature type="chain" id="PRO_5000006492" description="Weak neurotoxin WNTX33">
    <location>
        <begin position="22"/>
        <end position="83"/>
    </location>
</feature>
<feature type="disulfide bond" evidence="2">
    <location>
        <begin position="24"/>
        <end position="45"/>
    </location>
</feature>
<feature type="disulfide bond" evidence="2">
    <location>
        <begin position="38"/>
        <end position="62"/>
    </location>
</feature>
<feature type="disulfide bond" evidence="2">
    <location>
        <begin position="64"/>
        <end position="75"/>
    </location>
</feature>
<feature type="disulfide bond" evidence="2">
    <location>
        <begin position="76"/>
        <end position="81"/>
    </location>
</feature>
<sequence length="83" mass="9283">MKTLLLTLVVVTIVCLDLGYSLICFNQETYRPETTTTCPDGEDTCYSTFWNDHRGVKIERGCGCPRVNPGISIICCKTDKCNN</sequence>